<proteinExistence type="inferred from homology"/>
<organism>
    <name type="scientific">Helicobacter pylori (strain ATCC 700392 / 26695)</name>
    <name type="common">Campylobacter pylori</name>
    <dbReference type="NCBI Taxonomy" id="85962"/>
    <lineage>
        <taxon>Bacteria</taxon>
        <taxon>Pseudomonadati</taxon>
        <taxon>Campylobacterota</taxon>
        <taxon>Epsilonproteobacteria</taxon>
        <taxon>Campylobacterales</taxon>
        <taxon>Helicobacteraceae</taxon>
        <taxon>Helicobacter</taxon>
    </lineage>
</organism>
<accession>Q48269</accession>
<accession>O07681</accession>
<sequence length="237" mass="26618">MPINPLYLFPNLFTASSIFLGMMSIFYASSYQFVMACWLVVASLILDGLDGRVARLTNTTSKFGIEFDSLADVIAFGVAPSLIAYFYVGYNFGRIGMAVSALFVIFGAIRLARFNISTNTSDPYSFIGIPIPAAAVLVVLCVLLDNKYHFLEGNTEKLFLSFIVLLGVLMVSNIRYPNFKKVKWNLKLFILVLIFLSLVFVRPLEALSVFMGLYLIYGIIRWLFLMVKIIFNKNKSA</sequence>
<feature type="chain" id="PRO_0000056794" description="CDP-diacylglycerol--serine O-phosphatidyltransferase">
    <location>
        <begin position="1"/>
        <end position="237"/>
    </location>
</feature>
<feature type="transmembrane region" description="Helical" evidence="1">
    <location>
        <begin position="3"/>
        <end position="23"/>
    </location>
</feature>
<feature type="transmembrane region" description="Helical" evidence="1">
    <location>
        <begin position="25"/>
        <end position="45"/>
    </location>
</feature>
<feature type="transmembrane region" description="Helical" evidence="1">
    <location>
        <begin position="73"/>
        <end position="93"/>
    </location>
</feature>
<feature type="transmembrane region" description="Helical" evidence="1">
    <location>
        <begin position="95"/>
        <end position="115"/>
    </location>
</feature>
<feature type="transmembrane region" description="Helical" evidence="1">
    <location>
        <begin position="124"/>
        <end position="144"/>
    </location>
</feature>
<feature type="transmembrane region" description="Helical" evidence="1">
    <location>
        <begin position="150"/>
        <end position="170"/>
    </location>
</feature>
<feature type="transmembrane region" description="Helical" evidence="1">
    <location>
        <begin position="184"/>
        <end position="204"/>
    </location>
</feature>
<feature type="transmembrane region" description="Helical" evidence="1">
    <location>
        <begin position="207"/>
        <end position="227"/>
    </location>
</feature>
<feature type="sequence variant" description="In strain: A68 and UA802.">
    <original>A</original>
    <variation>T</variation>
    <location>
        <position position="84"/>
    </location>
</feature>
<feature type="sequence variant" description="In strain: NCTC 11638.">
    <original>V</original>
    <variation>M</variation>
    <location>
        <position position="138"/>
    </location>
</feature>
<feature type="sequence variant" description="In strain: NCTC 11638.">
    <original>R</original>
    <variation>H</variation>
    <location>
        <position position="202"/>
    </location>
</feature>
<feature type="sequence variant" description="In strain: NCTC 11638.">
    <original>A</original>
    <variation>T</variation>
    <location>
        <position position="237"/>
    </location>
</feature>
<gene>
    <name type="primary">pssA</name>
    <name type="synonym">ptr</name>
    <name type="ordered locus">HP_1071</name>
</gene>
<evidence type="ECO:0000255" key="1"/>
<evidence type="ECO:0000305" key="2"/>
<name>PSS_HELPY</name>
<protein>
    <recommendedName>
        <fullName>CDP-diacylglycerol--serine O-phosphatidyltransferase</fullName>
        <ecNumber>2.7.8.8</ecNumber>
    </recommendedName>
    <alternativeName>
        <fullName>Phosphatidylserine synthase</fullName>
    </alternativeName>
</protein>
<comment type="catalytic activity">
    <reaction>
        <text>a CDP-1,2-diacyl-sn-glycerol + L-serine = a 1,2-diacyl-sn-glycero-3-phospho-L-serine + CMP + H(+)</text>
        <dbReference type="Rhea" id="RHEA:16913"/>
        <dbReference type="ChEBI" id="CHEBI:15378"/>
        <dbReference type="ChEBI" id="CHEBI:33384"/>
        <dbReference type="ChEBI" id="CHEBI:57262"/>
        <dbReference type="ChEBI" id="CHEBI:58332"/>
        <dbReference type="ChEBI" id="CHEBI:60377"/>
        <dbReference type="EC" id="2.7.8.8"/>
    </reaction>
</comment>
<comment type="subcellular location">
    <subcellularLocation>
        <location>Cell membrane</location>
        <topology>Multi-pass membrane protein</topology>
    </subcellularLocation>
</comment>
<comment type="similarity">
    <text evidence="2">Belongs to the CDP-alcohol phosphatidyltransferase class-I family.</text>
</comment>
<dbReference type="EC" id="2.7.8.8"/>
<dbReference type="EMBL" id="U59625">
    <property type="protein sequence ID" value="AAB05473.1"/>
    <property type="molecule type" value="Genomic_DNA"/>
</dbReference>
<dbReference type="EMBL" id="U97567">
    <property type="protein sequence ID" value="AAB66379.1"/>
    <property type="molecule type" value="Genomic_DNA"/>
</dbReference>
<dbReference type="EMBL" id="AF005718">
    <property type="protein sequence ID" value="AAC45587.1"/>
    <property type="molecule type" value="Genomic_DNA"/>
</dbReference>
<dbReference type="EMBL" id="AE000511">
    <property type="protein sequence ID" value="AAD08116.1"/>
    <property type="molecule type" value="Genomic_DNA"/>
</dbReference>
<dbReference type="PIR" id="G64653">
    <property type="entry name" value="G64653"/>
</dbReference>
<dbReference type="RefSeq" id="NP_207862.1">
    <property type="nucleotide sequence ID" value="NC_000915.1"/>
</dbReference>
<dbReference type="RefSeq" id="WP_001122183.1">
    <property type="nucleotide sequence ID" value="NC_018939.1"/>
</dbReference>
<dbReference type="SMR" id="Q48269"/>
<dbReference type="STRING" id="85962.HP_1071"/>
<dbReference type="PaxDb" id="85962-C694_05535"/>
<dbReference type="DNASU" id="899607"/>
<dbReference type="EnsemblBacteria" id="AAD08116">
    <property type="protein sequence ID" value="AAD08116"/>
    <property type="gene ID" value="HP_1071"/>
</dbReference>
<dbReference type="KEGG" id="heo:C694_05535"/>
<dbReference type="KEGG" id="hpy:HP_1071"/>
<dbReference type="PATRIC" id="fig|85962.47.peg.1150"/>
<dbReference type="eggNOG" id="COG1183">
    <property type="taxonomic scope" value="Bacteria"/>
</dbReference>
<dbReference type="InParanoid" id="Q48269"/>
<dbReference type="OrthoDB" id="9777147at2"/>
<dbReference type="PhylomeDB" id="Q48269"/>
<dbReference type="Proteomes" id="UP000000429">
    <property type="component" value="Chromosome"/>
</dbReference>
<dbReference type="GO" id="GO:0005886">
    <property type="term" value="C:plasma membrane"/>
    <property type="evidence" value="ECO:0007669"/>
    <property type="project" value="UniProtKB-SubCell"/>
</dbReference>
<dbReference type="GO" id="GO:0003882">
    <property type="term" value="F:CDP-diacylglycerol-serine O-phosphatidyltransferase activity"/>
    <property type="evidence" value="ECO:0007669"/>
    <property type="project" value="UniProtKB-EC"/>
</dbReference>
<dbReference type="GO" id="GO:0008654">
    <property type="term" value="P:phospholipid biosynthetic process"/>
    <property type="evidence" value="ECO:0007669"/>
    <property type="project" value="UniProtKB-KW"/>
</dbReference>
<dbReference type="Gene3D" id="1.20.120.1760">
    <property type="match status" value="1"/>
</dbReference>
<dbReference type="InterPro" id="IPR050324">
    <property type="entry name" value="CDP-alcohol_PTase-I"/>
</dbReference>
<dbReference type="InterPro" id="IPR004533">
    <property type="entry name" value="CDP-diaglyc--ser_O-PTrfase"/>
</dbReference>
<dbReference type="InterPro" id="IPR000462">
    <property type="entry name" value="CDP-OH_P_trans"/>
</dbReference>
<dbReference type="InterPro" id="IPR043130">
    <property type="entry name" value="CDP-OH_PTrfase_TM_dom"/>
</dbReference>
<dbReference type="InterPro" id="IPR048254">
    <property type="entry name" value="CDP_ALCOHOL_P_TRANSF_CS"/>
</dbReference>
<dbReference type="NCBIfam" id="TIGR00473">
    <property type="entry name" value="pssA"/>
    <property type="match status" value="1"/>
</dbReference>
<dbReference type="PANTHER" id="PTHR14269">
    <property type="entry name" value="CDP-DIACYLGLYCEROL--GLYCEROL-3-PHOSPHATE 3-PHOSPHATIDYLTRANSFERASE-RELATED"/>
    <property type="match status" value="1"/>
</dbReference>
<dbReference type="PANTHER" id="PTHR14269:SF61">
    <property type="entry name" value="CDP-DIACYLGLYCEROL--SERINE O-PHOSPHATIDYLTRANSFERASE"/>
    <property type="match status" value="1"/>
</dbReference>
<dbReference type="Pfam" id="PF01066">
    <property type="entry name" value="CDP-OH_P_transf"/>
    <property type="match status" value="1"/>
</dbReference>
<dbReference type="PROSITE" id="PS00379">
    <property type="entry name" value="CDP_ALCOHOL_P_TRANSF"/>
    <property type="match status" value="1"/>
</dbReference>
<reference key="1">
    <citation type="journal article" date="1996" name="J. Biol. Chem.">
        <title>Cloning and membrane topology of a P type ATPase from Helicobacter pylori.</title>
        <authorList>
            <person name="Melchers K."/>
            <person name="Weitzenegger T."/>
            <person name="Buhmann A."/>
            <person name="Steinhilber W."/>
            <person name="Sachs G."/>
            <person name="Schaefer K.P."/>
        </authorList>
    </citation>
    <scope>NUCLEOTIDE SEQUENCE [GENOMIC DNA]</scope>
    <source>
        <strain>A68</strain>
    </source>
</reference>
<reference key="2">
    <citation type="journal article" date="1997" name="J. Bacteriol.">
        <title>Identification and characterization of an operon of Helicobacter pylori that is involved in motility and stress adaptation.</title>
        <authorList>
            <person name="Beier D."/>
            <person name="Spohn G."/>
            <person name="Rappuoli R."/>
            <person name="Scarlato V."/>
        </authorList>
    </citation>
    <scope>NUCLEOTIDE SEQUENCE [GENOMIC DNA]</scope>
    <source>
        <strain>DSM 4867 / CCUG 17874 / NCTC 11638</strain>
    </source>
</reference>
<reference key="3">
    <citation type="journal article" date="1997" name="J. Bacteriol.">
        <title>The Helicobacter pylori gene encoding phosphatidylserine synthase: sequence, expression, and insertional mutagenesis.</title>
        <authorList>
            <person name="Ge Z."/>
            <person name="Taylor D.E."/>
        </authorList>
    </citation>
    <scope>NUCLEOTIDE SEQUENCE [GENOMIC DNA]</scope>
    <source>
        <strain>ATCC 43629 / JCM 7656 / NCTC 11639 / UA802</strain>
    </source>
</reference>
<reference key="4">
    <citation type="journal article" date="1997" name="Nature">
        <title>The complete genome sequence of the gastric pathogen Helicobacter pylori.</title>
        <authorList>
            <person name="Tomb J.-F."/>
            <person name="White O."/>
            <person name="Kerlavage A.R."/>
            <person name="Clayton R.A."/>
            <person name="Sutton G.G."/>
            <person name="Fleischmann R.D."/>
            <person name="Ketchum K.A."/>
            <person name="Klenk H.-P."/>
            <person name="Gill S.R."/>
            <person name="Dougherty B.A."/>
            <person name="Nelson K.E."/>
            <person name="Quackenbush J."/>
            <person name="Zhou L."/>
            <person name="Kirkness E.F."/>
            <person name="Peterson S.N."/>
            <person name="Loftus B.J."/>
            <person name="Richardson D.L."/>
            <person name="Dodson R.J."/>
            <person name="Khalak H.G."/>
            <person name="Glodek A."/>
            <person name="McKenney K."/>
            <person name="FitzGerald L.M."/>
            <person name="Lee N."/>
            <person name="Adams M.D."/>
            <person name="Hickey E.K."/>
            <person name="Berg D.E."/>
            <person name="Gocayne J.D."/>
            <person name="Utterback T.R."/>
            <person name="Peterson J.D."/>
            <person name="Kelley J.M."/>
            <person name="Cotton M.D."/>
            <person name="Weidman J.F."/>
            <person name="Fujii C."/>
            <person name="Bowman C."/>
            <person name="Watthey L."/>
            <person name="Wallin E."/>
            <person name="Hayes W.S."/>
            <person name="Borodovsky M."/>
            <person name="Karp P.D."/>
            <person name="Smith H.O."/>
            <person name="Fraser C.M."/>
            <person name="Venter J.C."/>
        </authorList>
    </citation>
    <scope>NUCLEOTIDE SEQUENCE [LARGE SCALE GENOMIC DNA]</scope>
    <source>
        <strain>ATCC 700392 / 26695</strain>
    </source>
</reference>
<keyword id="KW-1003">Cell membrane</keyword>
<keyword id="KW-0444">Lipid biosynthesis</keyword>
<keyword id="KW-0443">Lipid metabolism</keyword>
<keyword id="KW-0472">Membrane</keyword>
<keyword id="KW-0594">Phospholipid biosynthesis</keyword>
<keyword id="KW-1208">Phospholipid metabolism</keyword>
<keyword id="KW-1185">Reference proteome</keyword>
<keyword id="KW-0808">Transferase</keyword>
<keyword id="KW-0812">Transmembrane</keyword>
<keyword id="KW-1133">Transmembrane helix</keyword>